<accession>A1SQ24</accession>
<proteinExistence type="inferred from homology"/>
<feature type="chain" id="PRO_1000009775" description="dCTP deaminase, dUMP-forming">
    <location>
        <begin position="1"/>
        <end position="191"/>
    </location>
</feature>
<feature type="region of interest" description="Disordered" evidence="2">
    <location>
        <begin position="163"/>
        <end position="191"/>
    </location>
</feature>
<feature type="compositionally biased region" description="Polar residues" evidence="2">
    <location>
        <begin position="171"/>
        <end position="191"/>
    </location>
</feature>
<feature type="active site" description="Proton donor/acceptor" evidence="1">
    <location>
        <position position="129"/>
    </location>
</feature>
<feature type="binding site" evidence="1">
    <location>
        <begin position="101"/>
        <end position="106"/>
    </location>
    <ligand>
        <name>dCTP</name>
        <dbReference type="ChEBI" id="CHEBI:61481"/>
    </ligand>
</feature>
<feature type="binding site" evidence="1">
    <location>
        <position position="119"/>
    </location>
    <ligand>
        <name>dCTP</name>
        <dbReference type="ChEBI" id="CHEBI:61481"/>
    </ligand>
</feature>
<feature type="binding site" evidence="1">
    <location>
        <begin position="127"/>
        <end position="129"/>
    </location>
    <ligand>
        <name>dCTP</name>
        <dbReference type="ChEBI" id="CHEBI:61481"/>
    </ligand>
</feature>
<feature type="binding site" evidence="1">
    <location>
        <position position="148"/>
    </location>
    <ligand>
        <name>dCTP</name>
        <dbReference type="ChEBI" id="CHEBI:61481"/>
    </ligand>
</feature>
<feature type="binding site" evidence="1">
    <location>
        <position position="162"/>
    </location>
    <ligand>
        <name>dCTP</name>
        <dbReference type="ChEBI" id="CHEBI:61481"/>
    </ligand>
</feature>
<feature type="binding site" evidence="1">
    <location>
        <position position="174"/>
    </location>
    <ligand>
        <name>dCTP</name>
        <dbReference type="ChEBI" id="CHEBI:61481"/>
    </ligand>
</feature>
<feature type="site" description="Important for bifunctional activity" evidence="1">
    <location>
        <begin position="116"/>
        <end position="117"/>
    </location>
</feature>
<name>DCDB_NOCSJ</name>
<protein>
    <recommendedName>
        <fullName evidence="1">dCTP deaminase, dUMP-forming</fullName>
        <ecNumber evidence="1">3.5.4.30</ecNumber>
    </recommendedName>
    <alternativeName>
        <fullName evidence="1">Bifunctional dCTP deaminase:dUTPase</fullName>
    </alternativeName>
    <alternativeName>
        <fullName evidence="1">DCD-DUT</fullName>
    </alternativeName>
</protein>
<dbReference type="EC" id="3.5.4.30" evidence="1"/>
<dbReference type="EMBL" id="CP000509">
    <property type="protein sequence ID" value="ABL83909.1"/>
    <property type="molecule type" value="Genomic_DNA"/>
</dbReference>
<dbReference type="RefSeq" id="WP_011757838.1">
    <property type="nucleotide sequence ID" value="NC_008699.1"/>
</dbReference>
<dbReference type="SMR" id="A1SQ24"/>
<dbReference type="STRING" id="196162.Noca_4412"/>
<dbReference type="KEGG" id="nca:Noca_4412"/>
<dbReference type="eggNOG" id="COG0717">
    <property type="taxonomic scope" value="Bacteria"/>
</dbReference>
<dbReference type="HOGENOM" id="CLU_087476_2_0_11"/>
<dbReference type="OrthoDB" id="9780956at2"/>
<dbReference type="UniPathway" id="UPA00610">
    <property type="reaction ID" value="UER00667"/>
</dbReference>
<dbReference type="Proteomes" id="UP000000640">
    <property type="component" value="Chromosome"/>
</dbReference>
<dbReference type="GO" id="GO:0033973">
    <property type="term" value="F:dCTP deaminase (dUMP-forming) activity"/>
    <property type="evidence" value="ECO:0007669"/>
    <property type="project" value="UniProtKB-UniRule"/>
</dbReference>
<dbReference type="GO" id="GO:0008829">
    <property type="term" value="F:dCTP deaminase activity"/>
    <property type="evidence" value="ECO:0007669"/>
    <property type="project" value="InterPro"/>
</dbReference>
<dbReference type="GO" id="GO:0000166">
    <property type="term" value="F:nucleotide binding"/>
    <property type="evidence" value="ECO:0007669"/>
    <property type="project" value="UniProtKB-KW"/>
</dbReference>
<dbReference type="GO" id="GO:0006226">
    <property type="term" value="P:dUMP biosynthetic process"/>
    <property type="evidence" value="ECO:0007669"/>
    <property type="project" value="UniProtKB-UniRule"/>
</dbReference>
<dbReference type="GO" id="GO:0006229">
    <property type="term" value="P:dUTP biosynthetic process"/>
    <property type="evidence" value="ECO:0007669"/>
    <property type="project" value="InterPro"/>
</dbReference>
<dbReference type="GO" id="GO:0015949">
    <property type="term" value="P:nucleobase-containing small molecule interconversion"/>
    <property type="evidence" value="ECO:0007669"/>
    <property type="project" value="TreeGrafter"/>
</dbReference>
<dbReference type="CDD" id="cd07557">
    <property type="entry name" value="trimeric_dUTPase"/>
    <property type="match status" value="1"/>
</dbReference>
<dbReference type="FunFam" id="2.70.40.10:FF:000005">
    <property type="entry name" value="dCTP deaminase, dUMP-forming"/>
    <property type="match status" value="1"/>
</dbReference>
<dbReference type="Gene3D" id="2.70.40.10">
    <property type="match status" value="1"/>
</dbReference>
<dbReference type="HAMAP" id="MF_00146">
    <property type="entry name" value="dCTP_deaminase"/>
    <property type="match status" value="1"/>
</dbReference>
<dbReference type="InterPro" id="IPR011962">
    <property type="entry name" value="dCTP_deaminase"/>
</dbReference>
<dbReference type="InterPro" id="IPR036157">
    <property type="entry name" value="dUTPase-like_sf"/>
</dbReference>
<dbReference type="InterPro" id="IPR033704">
    <property type="entry name" value="dUTPase_trimeric"/>
</dbReference>
<dbReference type="NCBIfam" id="TIGR02274">
    <property type="entry name" value="dCTP_deam"/>
    <property type="match status" value="1"/>
</dbReference>
<dbReference type="PANTHER" id="PTHR42680">
    <property type="entry name" value="DCTP DEAMINASE"/>
    <property type="match status" value="1"/>
</dbReference>
<dbReference type="PANTHER" id="PTHR42680:SF3">
    <property type="entry name" value="DCTP DEAMINASE"/>
    <property type="match status" value="1"/>
</dbReference>
<dbReference type="Pfam" id="PF22769">
    <property type="entry name" value="DCD"/>
    <property type="match status" value="1"/>
</dbReference>
<dbReference type="SUPFAM" id="SSF51283">
    <property type="entry name" value="dUTPase-like"/>
    <property type="match status" value="1"/>
</dbReference>
<gene>
    <name evidence="1" type="primary">dcd</name>
    <name type="ordered locus">Noca_4412</name>
</gene>
<sequence>MLLSDRDILVEIDAGRVALEPYDPGMLQPSSIDVRLDRFFRVFENHKYPHIDPAADQSDLTRMVEPEGDEPFILHPGEFVLGSTYEVVTLPDDIAARVEGKSSLGRLGLLTHATAGFVDPGFSGHVTLELANVATLPIKLYPGMKIGQFCFFRLSSPSEHPYGSAKYGSRYQGQRGPTPSRSYQNFHRTPI</sequence>
<evidence type="ECO:0000255" key="1">
    <source>
        <dbReference type="HAMAP-Rule" id="MF_00146"/>
    </source>
</evidence>
<evidence type="ECO:0000256" key="2">
    <source>
        <dbReference type="SAM" id="MobiDB-lite"/>
    </source>
</evidence>
<organism>
    <name type="scientific">Nocardioides sp. (strain ATCC BAA-499 / JS614)</name>
    <dbReference type="NCBI Taxonomy" id="196162"/>
    <lineage>
        <taxon>Bacteria</taxon>
        <taxon>Bacillati</taxon>
        <taxon>Actinomycetota</taxon>
        <taxon>Actinomycetes</taxon>
        <taxon>Propionibacteriales</taxon>
        <taxon>Nocardioidaceae</taxon>
        <taxon>Nocardioides</taxon>
    </lineage>
</organism>
<keyword id="KW-0378">Hydrolase</keyword>
<keyword id="KW-0546">Nucleotide metabolism</keyword>
<keyword id="KW-0547">Nucleotide-binding</keyword>
<keyword id="KW-1185">Reference proteome</keyword>
<reference key="1">
    <citation type="submission" date="2006-12" db="EMBL/GenBank/DDBJ databases">
        <title>Complete sequence of chromosome 1 of Nocardioides sp. JS614.</title>
        <authorList>
            <person name="Copeland A."/>
            <person name="Lucas S."/>
            <person name="Lapidus A."/>
            <person name="Barry K."/>
            <person name="Detter J.C."/>
            <person name="Glavina del Rio T."/>
            <person name="Hammon N."/>
            <person name="Israni S."/>
            <person name="Dalin E."/>
            <person name="Tice H."/>
            <person name="Pitluck S."/>
            <person name="Thompson L.S."/>
            <person name="Brettin T."/>
            <person name="Bruce D."/>
            <person name="Han C."/>
            <person name="Tapia R."/>
            <person name="Schmutz J."/>
            <person name="Larimer F."/>
            <person name="Land M."/>
            <person name="Hauser L."/>
            <person name="Kyrpides N."/>
            <person name="Kim E."/>
            <person name="Mattes T."/>
            <person name="Gossett J."/>
            <person name="Richardson P."/>
        </authorList>
    </citation>
    <scope>NUCLEOTIDE SEQUENCE [LARGE SCALE GENOMIC DNA]</scope>
    <source>
        <strain>ATCC BAA-499 / JS614</strain>
    </source>
</reference>
<comment type="function">
    <text evidence="1">Bifunctional enzyme that catalyzes both the deamination of dCTP to dUTP and the hydrolysis of dUTP to dUMP without releasing the toxic dUTP intermediate.</text>
</comment>
<comment type="catalytic activity">
    <reaction evidence="1">
        <text>dCTP + 2 H2O = dUMP + NH4(+) + diphosphate</text>
        <dbReference type="Rhea" id="RHEA:19205"/>
        <dbReference type="ChEBI" id="CHEBI:15377"/>
        <dbReference type="ChEBI" id="CHEBI:28938"/>
        <dbReference type="ChEBI" id="CHEBI:33019"/>
        <dbReference type="ChEBI" id="CHEBI:61481"/>
        <dbReference type="ChEBI" id="CHEBI:246422"/>
        <dbReference type="EC" id="3.5.4.30"/>
    </reaction>
</comment>
<comment type="pathway">
    <text evidence="1">Pyrimidine metabolism; dUMP biosynthesis; dUMP from dCTP: step 1/1.</text>
</comment>
<comment type="subunit">
    <text evidence="1">Homotrimer.</text>
</comment>
<comment type="similarity">
    <text evidence="1">Belongs to the dCTP deaminase family.</text>
</comment>